<dbReference type="EC" id="2.7.2.3" evidence="1"/>
<dbReference type="EMBL" id="BA000040">
    <property type="protein sequence ID" value="BAC46787.1"/>
    <property type="molecule type" value="Genomic_DNA"/>
</dbReference>
<dbReference type="RefSeq" id="NP_768162.1">
    <property type="nucleotide sequence ID" value="NC_004463.1"/>
</dbReference>
<dbReference type="RefSeq" id="WP_011084338.1">
    <property type="nucleotide sequence ID" value="NC_004463.1"/>
</dbReference>
<dbReference type="SMR" id="Q89U95"/>
<dbReference type="FunCoup" id="Q89U95">
    <property type="interactions" value="643"/>
</dbReference>
<dbReference type="STRING" id="224911.AAV28_04550"/>
<dbReference type="EnsemblBacteria" id="BAC46787">
    <property type="protein sequence ID" value="BAC46787"/>
    <property type="gene ID" value="BAC46787"/>
</dbReference>
<dbReference type="GeneID" id="46488795"/>
<dbReference type="KEGG" id="bja:bll1522"/>
<dbReference type="PATRIC" id="fig|224911.44.peg.955"/>
<dbReference type="eggNOG" id="COG0126">
    <property type="taxonomic scope" value="Bacteria"/>
</dbReference>
<dbReference type="HOGENOM" id="CLU_025427_0_2_5"/>
<dbReference type="InParanoid" id="Q89U95"/>
<dbReference type="OrthoDB" id="9808460at2"/>
<dbReference type="PhylomeDB" id="Q89U95"/>
<dbReference type="UniPathway" id="UPA00109">
    <property type="reaction ID" value="UER00185"/>
</dbReference>
<dbReference type="Proteomes" id="UP000002526">
    <property type="component" value="Chromosome"/>
</dbReference>
<dbReference type="GO" id="GO:0005829">
    <property type="term" value="C:cytosol"/>
    <property type="evidence" value="ECO:0000318"/>
    <property type="project" value="GO_Central"/>
</dbReference>
<dbReference type="GO" id="GO:0043531">
    <property type="term" value="F:ADP binding"/>
    <property type="evidence" value="ECO:0000318"/>
    <property type="project" value="GO_Central"/>
</dbReference>
<dbReference type="GO" id="GO:0005524">
    <property type="term" value="F:ATP binding"/>
    <property type="evidence" value="ECO:0000318"/>
    <property type="project" value="GO_Central"/>
</dbReference>
<dbReference type="GO" id="GO:0004618">
    <property type="term" value="F:phosphoglycerate kinase activity"/>
    <property type="evidence" value="ECO:0000318"/>
    <property type="project" value="GO_Central"/>
</dbReference>
<dbReference type="GO" id="GO:0006094">
    <property type="term" value="P:gluconeogenesis"/>
    <property type="evidence" value="ECO:0000318"/>
    <property type="project" value="GO_Central"/>
</dbReference>
<dbReference type="GO" id="GO:0006096">
    <property type="term" value="P:glycolytic process"/>
    <property type="evidence" value="ECO:0000318"/>
    <property type="project" value="GO_Central"/>
</dbReference>
<dbReference type="FunFam" id="3.40.50.1260:FF:000006">
    <property type="entry name" value="Phosphoglycerate kinase"/>
    <property type="match status" value="1"/>
</dbReference>
<dbReference type="FunFam" id="3.40.50.1260:FF:000031">
    <property type="entry name" value="Phosphoglycerate kinase 1"/>
    <property type="match status" value="1"/>
</dbReference>
<dbReference type="Gene3D" id="3.40.50.1260">
    <property type="entry name" value="Phosphoglycerate kinase, N-terminal domain"/>
    <property type="match status" value="2"/>
</dbReference>
<dbReference type="HAMAP" id="MF_00145">
    <property type="entry name" value="Phosphoglyc_kinase"/>
    <property type="match status" value="1"/>
</dbReference>
<dbReference type="InterPro" id="IPR001576">
    <property type="entry name" value="Phosphoglycerate_kinase"/>
</dbReference>
<dbReference type="InterPro" id="IPR015911">
    <property type="entry name" value="Phosphoglycerate_kinase_CS"/>
</dbReference>
<dbReference type="InterPro" id="IPR015824">
    <property type="entry name" value="Phosphoglycerate_kinase_N"/>
</dbReference>
<dbReference type="InterPro" id="IPR036043">
    <property type="entry name" value="Phosphoglycerate_kinase_sf"/>
</dbReference>
<dbReference type="PANTHER" id="PTHR11406">
    <property type="entry name" value="PHOSPHOGLYCERATE KINASE"/>
    <property type="match status" value="1"/>
</dbReference>
<dbReference type="PANTHER" id="PTHR11406:SF23">
    <property type="entry name" value="PHOSPHOGLYCERATE KINASE 1, CHLOROPLASTIC-RELATED"/>
    <property type="match status" value="1"/>
</dbReference>
<dbReference type="Pfam" id="PF00162">
    <property type="entry name" value="PGK"/>
    <property type="match status" value="1"/>
</dbReference>
<dbReference type="PIRSF" id="PIRSF000724">
    <property type="entry name" value="Pgk"/>
    <property type="match status" value="1"/>
</dbReference>
<dbReference type="PRINTS" id="PR00477">
    <property type="entry name" value="PHGLYCKINASE"/>
</dbReference>
<dbReference type="SUPFAM" id="SSF53748">
    <property type="entry name" value="Phosphoglycerate kinase"/>
    <property type="match status" value="1"/>
</dbReference>
<dbReference type="PROSITE" id="PS00111">
    <property type="entry name" value="PGLYCERATE_KINASE"/>
    <property type="match status" value="1"/>
</dbReference>
<proteinExistence type="inferred from homology"/>
<gene>
    <name evidence="1" type="primary">pgk</name>
    <name type="ordered locus">bll1522</name>
</gene>
<evidence type="ECO:0000255" key="1">
    <source>
        <dbReference type="HAMAP-Rule" id="MF_00145"/>
    </source>
</evidence>
<accession>Q89U95</accession>
<organism>
    <name type="scientific">Bradyrhizobium diazoefficiens (strain JCM 10833 / BCRC 13528 / IAM 13628 / NBRC 14792 / USDA 110)</name>
    <dbReference type="NCBI Taxonomy" id="224911"/>
    <lineage>
        <taxon>Bacteria</taxon>
        <taxon>Pseudomonadati</taxon>
        <taxon>Pseudomonadota</taxon>
        <taxon>Alphaproteobacteria</taxon>
        <taxon>Hyphomicrobiales</taxon>
        <taxon>Nitrobacteraceae</taxon>
        <taxon>Bradyrhizobium</taxon>
    </lineage>
</organism>
<comment type="catalytic activity">
    <reaction evidence="1">
        <text>(2R)-3-phosphoglycerate + ATP = (2R)-3-phospho-glyceroyl phosphate + ADP</text>
        <dbReference type="Rhea" id="RHEA:14801"/>
        <dbReference type="ChEBI" id="CHEBI:30616"/>
        <dbReference type="ChEBI" id="CHEBI:57604"/>
        <dbReference type="ChEBI" id="CHEBI:58272"/>
        <dbReference type="ChEBI" id="CHEBI:456216"/>
        <dbReference type="EC" id="2.7.2.3"/>
    </reaction>
</comment>
<comment type="pathway">
    <text evidence="1">Carbohydrate degradation; glycolysis; pyruvate from D-glyceraldehyde 3-phosphate: step 2/5.</text>
</comment>
<comment type="subunit">
    <text evidence="1">Monomer.</text>
</comment>
<comment type="subcellular location">
    <subcellularLocation>
        <location evidence="1">Cytoplasm</location>
    </subcellularLocation>
</comment>
<comment type="similarity">
    <text evidence="1">Belongs to the phosphoglycerate kinase family.</text>
</comment>
<keyword id="KW-0067">ATP-binding</keyword>
<keyword id="KW-0963">Cytoplasm</keyword>
<keyword id="KW-0324">Glycolysis</keyword>
<keyword id="KW-0418">Kinase</keyword>
<keyword id="KW-0547">Nucleotide-binding</keyword>
<keyword id="KW-1185">Reference proteome</keyword>
<keyword id="KW-0808">Transferase</keyword>
<reference key="1">
    <citation type="journal article" date="2002" name="DNA Res.">
        <title>Complete genomic sequence of nitrogen-fixing symbiotic bacterium Bradyrhizobium japonicum USDA110.</title>
        <authorList>
            <person name="Kaneko T."/>
            <person name="Nakamura Y."/>
            <person name="Sato S."/>
            <person name="Minamisawa K."/>
            <person name="Uchiumi T."/>
            <person name="Sasamoto S."/>
            <person name="Watanabe A."/>
            <person name="Idesawa K."/>
            <person name="Iriguchi M."/>
            <person name="Kawashima K."/>
            <person name="Kohara M."/>
            <person name="Matsumoto M."/>
            <person name="Shimpo S."/>
            <person name="Tsuruoka H."/>
            <person name="Wada T."/>
            <person name="Yamada M."/>
            <person name="Tabata S."/>
        </authorList>
    </citation>
    <scope>NUCLEOTIDE SEQUENCE [LARGE SCALE GENOMIC DNA]</scope>
    <source>
        <strain>JCM 10833 / BCRC 13528 / IAM 13628 / NBRC 14792 / USDA 110</strain>
    </source>
</reference>
<feature type="chain" id="PRO_0000145914" description="Phosphoglycerate kinase">
    <location>
        <begin position="1"/>
        <end position="398"/>
    </location>
</feature>
<feature type="binding site" evidence="1">
    <location>
        <begin position="23"/>
        <end position="25"/>
    </location>
    <ligand>
        <name>substrate</name>
    </ligand>
</feature>
<feature type="binding site" evidence="1">
    <location>
        <position position="38"/>
    </location>
    <ligand>
        <name>substrate</name>
    </ligand>
</feature>
<feature type="binding site" evidence="1">
    <location>
        <begin position="61"/>
        <end position="64"/>
    </location>
    <ligand>
        <name>substrate</name>
    </ligand>
</feature>
<feature type="binding site" evidence="1">
    <location>
        <position position="119"/>
    </location>
    <ligand>
        <name>substrate</name>
    </ligand>
</feature>
<feature type="binding site" evidence="1">
    <location>
        <position position="152"/>
    </location>
    <ligand>
        <name>substrate</name>
    </ligand>
</feature>
<feature type="binding site" evidence="1">
    <location>
        <position position="202"/>
    </location>
    <ligand>
        <name>ATP</name>
        <dbReference type="ChEBI" id="CHEBI:30616"/>
    </ligand>
</feature>
<feature type="binding site" evidence="1">
    <location>
        <position position="324"/>
    </location>
    <ligand>
        <name>ATP</name>
        <dbReference type="ChEBI" id="CHEBI:30616"/>
    </ligand>
</feature>
<feature type="binding site" evidence="1">
    <location>
        <begin position="354"/>
        <end position="357"/>
    </location>
    <ligand>
        <name>ATP</name>
        <dbReference type="ChEBI" id="CHEBI:30616"/>
    </ligand>
</feature>
<protein>
    <recommendedName>
        <fullName evidence="1">Phosphoglycerate kinase</fullName>
        <ecNumber evidence="1">2.7.2.3</ecNumber>
    </recommendedName>
</protein>
<sequence length="398" mass="41812">MANKFRTLDDVDVKGKRVLLRVDLNVPMENGRVTDATRLERVAPTITELADKGGKVILLAHFGRPKGRDAKESLKPVTEALSKVLNKPVAFADDCIGEPAATAVAALKDGDILCLENTRFHKEEEKNDPAFVAELAKLGDIWVNDAFSAAHRAHASTEGLGHKLPAYAGRTMQAELDALEKALGSPTKPVIAIIGGAKVSTKIDLLENLVSKVDALVIGGGMANTFLHAQGVGIGKSLAEKDLAPTALRIIEKAEAANCAIILPVDATVAYHFAANAPSHAYGLDAIPADGMILDVGPQSVARVHAAIDDAATLVWNGPLGAFEMQPFDRGTVAAAKHAAERTKAKKLISIAGGGDTVAALNQAHVAGDFTYVSTAGGAFLEWMEGKPLPGVEVLRIK</sequence>
<name>PGK_BRADU</name>